<feature type="chain" id="PRO_0000365825" description="Probable lysosomal cobalamin transporter">
    <location>
        <begin position="1"/>
        <end position="576"/>
    </location>
</feature>
<feature type="transmembrane region" description="Helical" evidence="2">
    <location>
        <begin position="8"/>
        <end position="28"/>
    </location>
</feature>
<feature type="transmembrane region" description="Helical" evidence="2">
    <location>
        <begin position="40"/>
        <end position="60"/>
    </location>
</feature>
<feature type="transmembrane region" description="Helical" evidence="2">
    <location>
        <begin position="98"/>
        <end position="118"/>
    </location>
</feature>
<feature type="transmembrane region" description="Helical" evidence="2">
    <location>
        <begin position="145"/>
        <end position="165"/>
    </location>
</feature>
<feature type="transmembrane region" description="Helical" evidence="2">
    <location>
        <begin position="188"/>
        <end position="208"/>
    </location>
</feature>
<feature type="transmembrane region" description="Helical" evidence="2">
    <location>
        <begin position="312"/>
        <end position="332"/>
    </location>
</feature>
<feature type="transmembrane region" description="Helical" evidence="2">
    <location>
        <begin position="347"/>
        <end position="367"/>
    </location>
</feature>
<feature type="transmembrane region" description="Helical" evidence="2">
    <location>
        <begin position="377"/>
        <end position="397"/>
    </location>
</feature>
<feature type="transmembrane region" description="Helical" evidence="2">
    <location>
        <begin position="419"/>
        <end position="439"/>
    </location>
</feature>
<feature type="transmembrane region" description="Helical" evidence="2">
    <location>
        <begin position="503"/>
        <end position="523"/>
    </location>
</feature>
<feature type="region of interest" description="Disordered" evidence="3">
    <location>
        <begin position="549"/>
        <end position="576"/>
    </location>
</feature>
<feature type="compositionally biased region" description="Polar residues" evidence="3">
    <location>
        <begin position="561"/>
        <end position="576"/>
    </location>
</feature>
<feature type="glycosylation site" description="N-linked (GlcNAc...) asparagine" evidence="2">
    <location>
        <position position="570"/>
    </location>
</feature>
<keyword id="KW-0846">Cobalamin</keyword>
<keyword id="KW-0170">Cobalt</keyword>
<keyword id="KW-0325">Glycoprotein</keyword>
<keyword id="KW-0458">Lysosome</keyword>
<keyword id="KW-0472">Membrane</keyword>
<keyword id="KW-1185">Reference proteome</keyword>
<keyword id="KW-0812">Transmembrane</keyword>
<keyword id="KW-1133">Transmembrane helix</keyword>
<keyword id="KW-0813">Transport</keyword>
<comment type="function">
    <text evidence="1">Probable lysosomal cobalamin transporter. Required to export cobalamin from lysosomes allowing its conversion to cofactors (By similarity).</text>
</comment>
<comment type="subcellular location">
    <subcellularLocation>
        <location evidence="1">Lysosome membrane</location>
        <topology evidence="1">Multi-pass membrane protein</topology>
    </subcellularLocation>
</comment>
<comment type="similarity">
    <text evidence="4">Belongs to the LIMR family. LMBRD1 subfamily.</text>
</comment>
<protein>
    <recommendedName>
        <fullName>Probable lysosomal cobalamin transporter</fullName>
    </recommendedName>
</protein>
<name>LMBD1_ASPNC</name>
<evidence type="ECO:0000250" key="1"/>
<evidence type="ECO:0000255" key="2"/>
<evidence type="ECO:0000256" key="3">
    <source>
        <dbReference type="SAM" id="MobiDB-lite"/>
    </source>
</evidence>
<evidence type="ECO:0000305" key="4"/>
<reference key="1">
    <citation type="journal article" date="2007" name="Nat. Biotechnol.">
        <title>Genome sequencing and analysis of the versatile cell factory Aspergillus niger CBS 513.88.</title>
        <authorList>
            <person name="Pel H.J."/>
            <person name="de Winde J.H."/>
            <person name="Archer D.B."/>
            <person name="Dyer P.S."/>
            <person name="Hofmann G."/>
            <person name="Schaap P.J."/>
            <person name="Turner G."/>
            <person name="de Vries R.P."/>
            <person name="Albang R."/>
            <person name="Albermann K."/>
            <person name="Andersen M.R."/>
            <person name="Bendtsen J.D."/>
            <person name="Benen J.A.E."/>
            <person name="van den Berg M."/>
            <person name="Breestraat S."/>
            <person name="Caddick M.X."/>
            <person name="Contreras R."/>
            <person name="Cornell M."/>
            <person name="Coutinho P.M."/>
            <person name="Danchin E.G.J."/>
            <person name="Debets A.J.M."/>
            <person name="Dekker P."/>
            <person name="van Dijck P.W.M."/>
            <person name="van Dijk A."/>
            <person name="Dijkhuizen L."/>
            <person name="Driessen A.J.M."/>
            <person name="d'Enfert C."/>
            <person name="Geysens S."/>
            <person name="Goosen C."/>
            <person name="Groot G.S.P."/>
            <person name="de Groot P.W.J."/>
            <person name="Guillemette T."/>
            <person name="Henrissat B."/>
            <person name="Herweijer M."/>
            <person name="van den Hombergh J.P.T.W."/>
            <person name="van den Hondel C.A.M.J.J."/>
            <person name="van der Heijden R.T.J.M."/>
            <person name="van der Kaaij R.M."/>
            <person name="Klis F.M."/>
            <person name="Kools H.J."/>
            <person name="Kubicek C.P."/>
            <person name="van Kuyk P.A."/>
            <person name="Lauber J."/>
            <person name="Lu X."/>
            <person name="van der Maarel M.J.E.C."/>
            <person name="Meulenberg R."/>
            <person name="Menke H."/>
            <person name="Mortimer M.A."/>
            <person name="Nielsen J."/>
            <person name="Oliver S.G."/>
            <person name="Olsthoorn M."/>
            <person name="Pal K."/>
            <person name="van Peij N.N.M.E."/>
            <person name="Ram A.F.J."/>
            <person name="Rinas U."/>
            <person name="Roubos J.A."/>
            <person name="Sagt C.M.J."/>
            <person name="Schmoll M."/>
            <person name="Sun J."/>
            <person name="Ussery D."/>
            <person name="Varga J."/>
            <person name="Vervecken W."/>
            <person name="van de Vondervoort P.J.J."/>
            <person name="Wedler H."/>
            <person name="Woesten H.A.B."/>
            <person name="Zeng A.-P."/>
            <person name="van Ooyen A.J.J."/>
            <person name="Visser J."/>
            <person name="Stam H."/>
        </authorList>
    </citation>
    <scope>NUCLEOTIDE SEQUENCE [LARGE SCALE GENOMIC DNA]</scope>
    <source>
        <strain>ATCC MYA-4892 / CBS 513.88 / FGSC A1513</strain>
    </source>
</reference>
<accession>A2R920</accession>
<proteinExistence type="inferred from homology"/>
<organism>
    <name type="scientific">Aspergillus niger (strain ATCC MYA-4892 / CBS 513.88 / FGSC A1513)</name>
    <dbReference type="NCBI Taxonomy" id="425011"/>
    <lineage>
        <taxon>Eukaryota</taxon>
        <taxon>Fungi</taxon>
        <taxon>Dikarya</taxon>
        <taxon>Ascomycota</taxon>
        <taxon>Pezizomycotina</taxon>
        <taxon>Eurotiomycetes</taxon>
        <taxon>Eurotiomycetidae</taxon>
        <taxon>Eurotiales</taxon>
        <taxon>Aspergillaceae</taxon>
        <taxon>Aspergillus</taxon>
        <taxon>Aspergillus subgen. Circumdati</taxon>
    </lineage>
</organism>
<sequence length="576" mass="64668">MALLQTSLIWAVYAIVVAVLVMVASVFIYTYQTPRDRSSVVTFTCIVAITSLLATVLLLPVDVALTSSTTSSKLGQRKPWATQDEVDKIVSLLTAVYYLLYSLDAFLCLLAIPFVYFWYEEYDEVAVESGEQSAAKRLWTAFKYTISFIAIVVVLFIVGFLVPVANIKDSKVSDYLRKLLAENRGERVLTFTLGLLITMGLFLYILYTSTGLAVLPMRMIRAAPSVSDMTWKASTSAQLESNRERQRQLEGRCRGDPGLLSSKERRELDTLVRDERTLIRRQRLAEEADGEGQSRFMRAWLKTTAFFRPLKLLGGIAILLITLMIWISMLLTAIDKAKNSICKQRCGYILSGIGVFNPINWIFVQSAKVFPIDYAVLTVVVLLLFGSSVVGISTIGIRFLWIRIFHVRKGHTSPQALLLTTAMLMLTILALDYSIPMLVAPQYATFGPQTFCDRPQGQQSDCLTNKHLIKPCSELTDNTAAKRVCTPSVTSMFLNRVTISYPFFGTVFFWSQFIFLVIYLLVLVTSFIRHPKLDERLLDQEAEEAEEERLLTSSARGVGDTYQSVGGRNNFSTRAG</sequence>
<dbReference type="EMBL" id="AM270382">
    <property type="protein sequence ID" value="CAK47111.1"/>
    <property type="molecule type" value="Genomic_DNA"/>
</dbReference>
<dbReference type="RefSeq" id="XP_001398212.1">
    <property type="nucleotide sequence ID" value="XM_001398175.2"/>
</dbReference>
<dbReference type="SMR" id="A2R920"/>
<dbReference type="EnsemblFungi" id="CAK47111">
    <property type="protein sequence ID" value="CAK47111"/>
    <property type="gene ID" value="An16g09150"/>
</dbReference>
<dbReference type="GeneID" id="4989305"/>
<dbReference type="KEGG" id="ang:An16g09150"/>
<dbReference type="VEuPathDB" id="FungiDB:An16g09150"/>
<dbReference type="HOGENOM" id="CLU_028341_1_0_1"/>
<dbReference type="Proteomes" id="UP000006706">
    <property type="component" value="Chromosome 5R"/>
</dbReference>
<dbReference type="GO" id="GO:0005774">
    <property type="term" value="C:vacuolar membrane"/>
    <property type="evidence" value="ECO:0007669"/>
    <property type="project" value="TreeGrafter"/>
</dbReference>
<dbReference type="GO" id="GO:0031419">
    <property type="term" value="F:cobalamin binding"/>
    <property type="evidence" value="ECO:0007669"/>
    <property type="project" value="UniProtKB-KW"/>
</dbReference>
<dbReference type="GO" id="GO:0072665">
    <property type="term" value="P:protein localization to vacuole"/>
    <property type="evidence" value="ECO:0007669"/>
    <property type="project" value="TreeGrafter"/>
</dbReference>
<dbReference type="InterPro" id="IPR050854">
    <property type="entry name" value="LMBD1_LysCbl_Transport"/>
</dbReference>
<dbReference type="InterPro" id="IPR006876">
    <property type="entry name" value="LMBR1-like_membr_prot"/>
</dbReference>
<dbReference type="PANTHER" id="PTHR16130:SF2">
    <property type="entry name" value="LYSOSOMAL COBALAMIN TRANSPORT ESCORT PROTEIN LMBD1"/>
    <property type="match status" value="1"/>
</dbReference>
<dbReference type="PANTHER" id="PTHR16130">
    <property type="entry name" value="LYSOSOMAL COBALAMIN TRANSPORTER-RELATED"/>
    <property type="match status" value="1"/>
</dbReference>
<dbReference type="Pfam" id="PF04791">
    <property type="entry name" value="LMBR1"/>
    <property type="match status" value="1"/>
</dbReference>
<gene>
    <name type="ORF">An16g09150</name>
</gene>